<keyword id="KW-0002">3D-structure</keyword>
<keyword id="KW-0067">ATP-binding</keyword>
<keyword id="KW-0436">Ligase</keyword>
<keyword id="KW-0547">Nucleotide-binding</keyword>
<keyword id="KW-1185">Reference proteome</keyword>
<proteinExistence type="evidence at protein level"/>
<comment type="function">
    <text evidence="2">Catalyzes the carboxylation of acetone to form acetoacetate. Has a reduced activity on butanone, and no activity on 2-pentatone, 3-pentatone, 2-hexanone, chloroacetone, pyruvate, phosphoenolpyruvate, acetaldehyde, propionaldehyde and propylene oxide.</text>
</comment>
<comment type="catalytic activity">
    <reaction evidence="2">
        <text>acetone + hydrogencarbonate + 2 ATP + 3 H2O = acetoacetate + 2 AMP + 4 phosphate + 4 H(+)</text>
        <dbReference type="Rhea" id="RHEA:18385"/>
        <dbReference type="ChEBI" id="CHEBI:13705"/>
        <dbReference type="ChEBI" id="CHEBI:15347"/>
        <dbReference type="ChEBI" id="CHEBI:15377"/>
        <dbReference type="ChEBI" id="CHEBI:15378"/>
        <dbReference type="ChEBI" id="CHEBI:17544"/>
        <dbReference type="ChEBI" id="CHEBI:30616"/>
        <dbReference type="ChEBI" id="CHEBI:43474"/>
        <dbReference type="ChEBI" id="CHEBI:456215"/>
        <dbReference type="EC" id="6.4.1.6"/>
    </reaction>
</comment>
<comment type="cofactor">
    <cofactor evidence="2">
        <name>Fe cation</name>
        <dbReference type="ChEBI" id="CHEBI:24875"/>
    </cofactor>
</comment>
<comment type="cofactor">
    <cofactor evidence="2">
        <name>Mg(2+)</name>
        <dbReference type="ChEBI" id="CHEBI:18420"/>
    </cofactor>
</comment>
<comment type="cofactor">
    <cofactor evidence="2">
        <name>Zn(2+)</name>
        <dbReference type="ChEBI" id="CHEBI:29105"/>
    </cofactor>
    <text evidence="2">Zn(2+). The heterohexamer contains tightly bound iron, manganese and zinc ions.</text>
</comment>
<comment type="biophysicochemical properties">
    <kinetics>
        <KM evidence="2">7.8 uM for acetone (in the presence of CO(2))</KM>
        <KM evidence="2">7.68 uM for acetone (in the absence of CO(2))</KM>
        <KM evidence="2">0.122 mM for ATP</KM>
        <KM evidence="2">4.17 mM for CO(2)</KM>
        <Vmax evidence="2">0.485 umol/min/mg enzyme toward acetone (in the presence of CO(2))</Vmax>
        <Vmax evidence="2">0.616 umol/min/mg enzyme toward acetone (in the absence of CO(2))</Vmax>
        <Vmax evidence="2">0.463 umol/min/mg enzyme toward ATP</Vmax>
        <Vmax evidence="2">0.225 umol/min/mg enzyme toward CO(2)</Vmax>
    </kinetics>
    <phDependence>
        <text evidence="2">Optimum pH is 7.6.</text>
    </phDependence>
</comment>
<comment type="subunit">
    <text evidence="2">Heterohexamer of two alpha, two beta and two gamma subunits.</text>
</comment>
<comment type="PTM">
    <text evidence="1">The N-terminus is blocked.</text>
</comment>
<comment type="mass spectrometry" mass="78300.0" method="MALDI" evidence="2"/>
<comment type="similarity">
    <text evidence="3">Belongs to the oxoprolinase family.</text>
</comment>
<feature type="chain" id="PRO_0000403051" description="Acetone carboxylase beta subunit">
    <location>
        <begin position="1"/>
        <end position="717"/>
    </location>
</feature>
<feature type="sequence conflict" description="In Ref. 1; AAM20736." evidence="3" ref="1">
    <original>A</original>
    <variation>R</variation>
    <location>
        <position position="352"/>
    </location>
</feature>
<feature type="strand" evidence="6">
    <location>
        <begin position="11"/>
        <end position="29"/>
    </location>
</feature>
<feature type="strand" evidence="6">
    <location>
        <begin position="34"/>
        <end position="40"/>
    </location>
</feature>
<feature type="helix" evidence="7">
    <location>
        <begin position="43"/>
        <end position="45"/>
    </location>
</feature>
<feature type="helix" evidence="6">
    <location>
        <begin position="46"/>
        <end position="59"/>
    </location>
</feature>
<feature type="turn" evidence="6">
    <location>
        <begin position="60"/>
        <end position="62"/>
    </location>
</feature>
<feature type="helix" evidence="6">
    <location>
        <begin position="65"/>
        <end position="71"/>
    </location>
</feature>
<feature type="strand" evidence="6">
    <location>
        <begin position="74"/>
        <end position="77"/>
    </location>
</feature>
<feature type="helix" evidence="6">
    <location>
        <begin position="81"/>
        <end position="88"/>
    </location>
</feature>
<feature type="strand" evidence="6">
    <location>
        <begin position="94"/>
        <end position="99"/>
    </location>
</feature>
<feature type="helix" evidence="6">
    <location>
        <begin position="105"/>
        <end position="108"/>
    </location>
</feature>
<feature type="turn" evidence="6">
    <location>
        <begin position="109"/>
        <end position="111"/>
    </location>
</feature>
<feature type="helix" evidence="6">
    <location>
        <begin position="112"/>
        <end position="114"/>
    </location>
</feature>
<feature type="turn" evidence="6">
    <location>
        <begin position="115"/>
        <end position="117"/>
    </location>
</feature>
<feature type="helix" evidence="6">
    <location>
        <begin position="120"/>
        <end position="124"/>
    </location>
</feature>
<feature type="helix" evidence="6">
    <location>
        <begin position="126"/>
        <end position="128"/>
    </location>
</feature>
<feature type="helix" evidence="6">
    <location>
        <begin position="138"/>
        <end position="140"/>
    </location>
</feature>
<feature type="strand" evidence="6">
    <location>
        <begin position="141"/>
        <end position="144"/>
    </location>
</feature>
<feature type="strand" evidence="6">
    <location>
        <begin position="154"/>
        <end position="156"/>
    </location>
</feature>
<feature type="helix" evidence="6">
    <location>
        <begin position="160"/>
        <end position="172"/>
    </location>
</feature>
<feature type="strand" evidence="6">
    <location>
        <begin position="176"/>
        <end position="180"/>
    </location>
</feature>
<feature type="turn" evidence="6">
    <location>
        <begin position="183"/>
        <end position="187"/>
    </location>
</feature>
<feature type="helix" evidence="6">
    <location>
        <begin position="190"/>
        <end position="206"/>
    </location>
</feature>
<feature type="strand" evidence="6">
    <location>
        <begin position="212"/>
        <end position="214"/>
    </location>
</feature>
<feature type="helix" evidence="6">
    <location>
        <begin position="215"/>
        <end position="217"/>
    </location>
</feature>
<feature type="helix" evidence="6">
    <location>
        <begin position="224"/>
        <end position="236"/>
    </location>
</feature>
<feature type="helix" evidence="6">
    <location>
        <begin position="239"/>
        <end position="241"/>
    </location>
</feature>
<feature type="helix" evidence="6">
    <location>
        <begin position="244"/>
        <end position="254"/>
    </location>
</feature>
<feature type="strand" evidence="6">
    <location>
        <begin position="262"/>
        <end position="264"/>
    </location>
</feature>
<feature type="strand" evidence="6">
    <location>
        <begin position="268"/>
        <end position="272"/>
    </location>
</feature>
<feature type="helix" evidence="6">
    <location>
        <begin position="278"/>
        <end position="281"/>
    </location>
</feature>
<feature type="helix" evidence="6">
    <location>
        <begin position="284"/>
        <end position="300"/>
    </location>
</feature>
<feature type="strand" evidence="6">
    <location>
        <begin position="304"/>
        <end position="310"/>
    </location>
</feature>
<feature type="strand" evidence="6">
    <location>
        <begin position="315"/>
        <end position="321"/>
    </location>
</feature>
<feature type="strand" evidence="6">
    <location>
        <begin position="327"/>
        <end position="330"/>
    </location>
</feature>
<feature type="strand" evidence="8">
    <location>
        <begin position="332"/>
        <end position="335"/>
    </location>
</feature>
<feature type="strand" evidence="6">
    <location>
        <begin position="342"/>
        <end position="349"/>
    </location>
</feature>
<feature type="strand" evidence="6">
    <location>
        <begin position="354"/>
        <end position="358"/>
    </location>
</feature>
<feature type="turn" evidence="6">
    <location>
        <begin position="360"/>
        <end position="362"/>
    </location>
</feature>
<feature type="strand" evidence="6">
    <location>
        <begin position="365"/>
        <end position="371"/>
    </location>
</feature>
<feature type="helix" evidence="6">
    <location>
        <begin position="373"/>
        <end position="375"/>
    </location>
</feature>
<feature type="helix" evidence="6">
    <location>
        <begin position="381"/>
        <end position="383"/>
    </location>
</feature>
<feature type="helix" evidence="6">
    <location>
        <begin position="390"/>
        <end position="396"/>
    </location>
</feature>
<feature type="helix" evidence="6">
    <location>
        <begin position="405"/>
        <end position="408"/>
    </location>
</feature>
<feature type="helix" evidence="6">
    <location>
        <begin position="414"/>
        <end position="424"/>
    </location>
</feature>
<feature type="helix" evidence="6">
    <location>
        <begin position="426"/>
        <end position="429"/>
    </location>
</feature>
<feature type="helix" evidence="6">
    <location>
        <begin position="433"/>
        <end position="458"/>
    </location>
</feature>
<feature type="helix" evidence="6">
    <location>
        <begin position="463"/>
        <end position="465"/>
    </location>
</feature>
<feature type="strand" evidence="6">
    <location>
        <begin position="467"/>
        <end position="474"/>
    </location>
</feature>
<feature type="helix" evidence="6">
    <location>
        <begin position="475"/>
        <end position="482"/>
    </location>
</feature>
<feature type="strand" evidence="6">
    <location>
        <begin position="489"/>
        <end position="494"/>
    </location>
</feature>
<feature type="helix" evidence="6">
    <location>
        <begin position="497"/>
        <end position="499"/>
    </location>
</feature>
<feature type="helix" evidence="6">
    <location>
        <begin position="500"/>
        <end position="507"/>
    </location>
</feature>
<feature type="strand" evidence="6">
    <location>
        <begin position="510"/>
        <end position="522"/>
    </location>
</feature>
<feature type="helix" evidence="6">
    <location>
        <begin position="528"/>
        <end position="555"/>
    </location>
</feature>
<feature type="helix" evidence="6">
    <location>
        <begin position="560"/>
        <end position="562"/>
    </location>
</feature>
<feature type="strand" evidence="6">
    <location>
        <begin position="564"/>
        <end position="573"/>
    </location>
</feature>
<feature type="strand" evidence="6">
    <location>
        <begin position="580"/>
        <end position="583"/>
    </location>
</feature>
<feature type="strand" evidence="7">
    <location>
        <begin position="585"/>
        <end position="587"/>
    </location>
</feature>
<feature type="helix" evidence="6">
    <location>
        <begin position="592"/>
        <end position="609"/>
    </location>
</feature>
<feature type="helix" evidence="6">
    <location>
        <begin position="612"/>
        <end position="614"/>
    </location>
</feature>
<feature type="helix" evidence="6">
    <location>
        <begin position="617"/>
        <end position="619"/>
    </location>
</feature>
<feature type="strand" evidence="6">
    <location>
        <begin position="621"/>
        <end position="632"/>
    </location>
</feature>
<feature type="helix" evidence="6">
    <location>
        <begin position="651"/>
        <end position="653"/>
    </location>
</feature>
<feature type="strand" evidence="6">
    <location>
        <begin position="654"/>
        <end position="662"/>
    </location>
</feature>
<feature type="strand" evidence="6">
    <location>
        <begin position="665"/>
        <end position="673"/>
    </location>
</feature>
<feature type="helix" evidence="6">
    <location>
        <begin position="674"/>
        <end position="676"/>
    </location>
</feature>
<feature type="strand" evidence="6">
    <location>
        <begin position="682"/>
        <end position="690"/>
    </location>
</feature>
<feature type="strand" evidence="6">
    <location>
        <begin position="695"/>
        <end position="698"/>
    </location>
</feature>
<feature type="strand" evidence="6">
    <location>
        <begin position="702"/>
        <end position="706"/>
    </location>
</feature>
<feature type="strand" evidence="6">
    <location>
        <begin position="710"/>
        <end position="716"/>
    </location>
</feature>
<evidence type="ECO:0000269" key="1">
    <source>
    </source>
</evidence>
<evidence type="ECO:0000269" key="2">
    <source>
    </source>
</evidence>
<evidence type="ECO:0000305" key="3"/>
<evidence type="ECO:0000312" key="4">
    <source>
        <dbReference type="EMBL" id="AAL17710.1"/>
    </source>
</evidence>
<evidence type="ECO:0000312" key="5">
    <source>
        <dbReference type="EMBL" id="ABS68738.1"/>
    </source>
</evidence>
<evidence type="ECO:0007829" key="6">
    <source>
        <dbReference type="PDB" id="5M45"/>
    </source>
</evidence>
<evidence type="ECO:0007829" key="7">
    <source>
        <dbReference type="PDB" id="5SVB"/>
    </source>
</evidence>
<evidence type="ECO:0007829" key="8">
    <source>
        <dbReference type="PDB" id="5SVC"/>
    </source>
</evidence>
<name>ACXA_XANP2</name>
<sequence length="717" mass="78509">MNVPVGHLRNVQVLGIDAGGTMTDTFFVDQDGDFVVGKAQSTPQNEALGLIASSEDGLANWGMSLHEALAQLQTGVYSGTAMLNRVVQRKGLKCGLIVNRGMEDFHRMGRAVQSHLGYAYEDRIHLNTHRYDPPLVPRHLTRGVVERTDMIGTQVIPLREDTARDAARDLIAADAEGIVISLLHSYKNPENERRVRDIVLEEVEKSGKKIPVFASADYYPVRKETHRTNTTILEGYAAEPSRQTLSKISNAFKERGTKFDFRVMATHGGTISWKAKELARTIVSGPIGGVIGAKYLGEVLGYKNIACSDIGGTSFDVALITQGEMTIKNDPDMARLVLSLPLVAMDSVGAGAGSFIRLDPYTRAIKLGPDSAGYRVGVCWKESGIETVTISDCHMVLGYLNPDNFLGGAVKLDRQRSVDAIKAQIADPLGLSVEDAAAGVIELLDSDLRDYLRSMISGKGYSPASFVCFSYGGAGPVHTYGYTEGLGFEDVIVPAWAAGFSAFGCAAADFEYRYDKSLDINMPTETPDTDKEKAAATLQAAWEELTKNVLEEFKLNGYSADQVTLQPGYRMQYRGQLNDLEIESPLAQAHTAADWDQLTDAFNATYGRVYAASARSPELGYSVTGAIMRGMVPIPKPKIPKEPEEGETPPESAKIGTRKFYRKKRWVDAQLYHMESLRPGNRVMGPAVIESDATTFVVPDGFETWLDGHRLFHLREV</sequence>
<protein>
    <recommendedName>
        <fullName evidence="4">Acetone carboxylase beta subunit</fullName>
        <ecNumber>6.4.1.6</ecNumber>
    </recommendedName>
</protein>
<organism>
    <name type="scientific">Xanthobacter autotrophicus (strain ATCC BAA-1158 / Py2)</name>
    <dbReference type="NCBI Taxonomy" id="78245"/>
    <lineage>
        <taxon>Bacteria</taxon>
        <taxon>Pseudomonadati</taxon>
        <taxon>Pseudomonadota</taxon>
        <taxon>Alphaproteobacteria</taxon>
        <taxon>Hyphomicrobiales</taxon>
        <taxon>Xanthobacteraceae</taxon>
        <taxon>Xanthobacter</taxon>
    </lineage>
</organism>
<dbReference type="EC" id="6.4.1.6"/>
<dbReference type="EMBL" id="AF251789">
    <property type="protein sequence ID" value="AAM20736.1"/>
    <property type="molecule type" value="Genomic_DNA"/>
</dbReference>
<dbReference type="EMBL" id="AY055852">
    <property type="protein sequence ID" value="AAL17710.1"/>
    <property type="molecule type" value="Genomic_DNA"/>
</dbReference>
<dbReference type="EMBL" id="CP000781">
    <property type="protein sequence ID" value="ABS68738.1"/>
    <property type="molecule type" value="Genomic_DNA"/>
</dbReference>
<dbReference type="PDB" id="5M45">
    <property type="method" value="X-ray"/>
    <property type="resolution" value="1.87 A"/>
    <property type="chains" value="B/E/H/K=1-717"/>
</dbReference>
<dbReference type="PDB" id="5SVB">
    <property type="method" value="X-ray"/>
    <property type="resolution" value="2.65 A"/>
    <property type="chains" value="B/E=2-717"/>
</dbReference>
<dbReference type="PDB" id="5SVC">
    <property type="method" value="X-ray"/>
    <property type="resolution" value="2.70 A"/>
    <property type="chains" value="B/E=1-717"/>
</dbReference>
<dbReference type="PDBsum" id="5M45"/>
<dbReference type="PDBsum" id="5SVB"/>
<dbReference type="PDBsum" id="5SVC"/>
<dbReference type="SMR" id="Q8RM04"/>
<dbReference type="STRING" id="78245.Xaut_3509"/>
<dbReference type="KEGG" id="xau:Xaut_3509"/>
<dbReference type="eggNOG" id="COG0145">
    <property type="taxonomic scope" value="Bacteria"/>
</dbReference>
<dbReference type="HOGENOM" id="CLU_002157_1_2_5"/>
<dbReference type="OrthoDB" id="9759608at2"/>
<dbReference type="PhylomeDB" id="Q8RM04"/>
<dbReference type="BioCyc" id="MetaCyc:MONOMER-13281"/>
<dbReference type="Proteomes" id="UP000002417">
    <property type="component" value="Chromosome"/>
</dbReference>
<dbReference type="GO" id="GO:0005829">
    <property type="term" value="C:cytosol"/>
    <property type="evidence" value="ECO:0007669"/>
    <property type="project" value="TreeGrafter"/>
</dbReference>
<dbReference type="GO" id="GO:0017168">
    <property type="term" value="F:5-oxoprolinase (ATP-hydrolyzing) activity"/>
    <property type="evidence" value="ECO:0007669"/>
    <property type="project" value="TreeGrafter"/>
</dbReference>
<dbReference type="GO" id="GO:0018710">
    <property type="term" value="F:acetone carboxylase activity"/>
    <property type="evidence" value="ECO:0000314"/>
    <property type="project" value="UniProtKB"/>
</dbReference>
<dbReference type="GO" id="GO:0005524">
    <property type="term" value="F:ATP binding"/>
    <property type="evidence" value="ECO:0007669"/>
    <property type="project" value="UniProtKB-KW"/>
</dbReference>
<dbReference type="GO" id="GO:0140977">
    <property type="term" value="P:cellular detoxification of acetone"/>
    <property type="evidence" value="ECO:0000314"/>
    <property type="project" value="UniProtKB"/>
</dbReference>
<dbReference type="GO" id="GO:0006749">
    <property type="term" value="P:glutathione metabolic process"/>
    <property type="evidence" value="ECO:0007669"/>
    <property type="project" value="TreeGrafter"/>
</dbReference>
<dbReference type="InterPro" id="IPR049517">
    <property type="entry name" value="ACX-like_C"/>
</dbReference>
<dbReference type="InterPro" id="IPR043129">
    <property type="entry name" value="ATPase_NBD"/>
</dbReference>
<dbReference type="InterPro" id="IPR008040">
    <property type="entry name" value="Hydant_A_N"/>
</dbReference>
<dbReference type="InterPro" id="IPR002821">
    <property type="entry name" value="Hydantoinase_A"/>
</dbReference>
<dbReference type="InterPro" id="IPR045079">
    <property type="entry name" value="Oxoprolinase-like"/>
</dbReference>
<dbReference type="PANTHER" id="PTHR11365">
    <property type="entry name" value="5-OXOPROLINASE RELATED"/>
    <property type="match status" value="1"/>
</dbReference>
<dbReference type="PANTHER" id="PTHR11365:SF23">
    <property type="entry name" value="HYPOTHETICAL 5-OXOPROLINASE (EUROFUNG)-RELATED"/>
    <property type="match status" value="1"/>
</dbReference>
<dbReference type="Pfam" id="PF19278">
    <property type="entry name" value="Hydant_A_C"/>
    <property type="match status" value="1"/>
</dbReference>
<dbReference type="Pfam" id="PF05378">
    <property type="entry name" value="Hydant_A_N"/>
    <property type="match status" value="1"/>
</dbReference>
<dbReference type="Pfam" id="PF01968">
    <property type="entry name" value="Hydantoinase_A"/>
    <property type="match status" value="1"/>
</dbReference>
<dbReference type="SUPFAM" id="SSF53067">
    <property type="entry name" value="Actin-like ATPase domain"/>
    <property type="match status" value="1"/>
</dbReference>
<accession>Q8RM04</accession>
<accession>Q8L3A7</accession>
<reference evidence="3 4" key="1">
    <citation type="journal article" date="2002" name="J. Bacteriol.">
        <title>Biochemical, molecular, and genetic analyses of the acetone carboxylases from Xanthobacter autotrophicus strain Py2 and Rhodobacter capsulatus strain B10.</title>
        <authorList>
            <person name="Sluis M.K."/>
            <person name="Larsen R.A."/>
            <person name="Krum J.G."/>
            <person name="Anderson R."/>
            <person name="Metcalf W.W."/>
            <person name="Ensign S.A."/>
        </authorList>
    </citation>
    <scope>NUCLEOTIDE SEQUENCE [GENOMIC DNA]</scope>
    <scope>IDENTIFICATION</scope>
    <scope>BLOCKAGE OF N-TERMINUS</scope>
</reference>
<reference evidence="5" key="2">
    <citation type="submission" date="2007-07" db="EMBL/GenBank/DDBJ databases">
        <title>Complete sequence of chromosome of Xanthobacter autotrophicus Py2.</title>
        <authorList>
            <consortium name="US DOE Joint Genome Institute"/>
            <person name="Copeland A."/>
            <person name="Lucas S."/>
            <person name="Lapidus A."/>
            <person name="Barry K."/>
            <person name="Glavina del Rio T."/>
            <person name="Hammon N."/>
            <person name="Israni S."/>
            <person name="Dalin E."/>
            <person name="Tice H."/>
            <person name="Pitluck S."/>
            <person name="Sims D."/>
            <person name="Brettin T."/>
            <person name="Bruce D."/>
            <person name="Detter J.C."/>
            <person name="Han C."/>
            <person name="Tapia R."/>
            <person name="Brainard J."/>
            <person name="Schmutz J."/>
            <person name="Larimer F."/>
            <person name="Land M."/>
            <person name="Hauser L."/>
            <person name="Kyrpides N."/>
            <person name="Kim E."/>
            <person name="Ensigns S.A."/>
            <person name="Richardson P."/>
        </authorList>
    </citation>
    <scope>NUCLEOTIDE SEQUENCE [LARGE SCALE GENOMIC DNA]</scope>
    <source>
        <strain>ATCC BAA-1158 / Py2</strain>
    </source>
</reference>
<reference evidence="3" key="3">
    <citation type="journal article" date="1997" name="Proc. Natl. Acad. Sci. U.S.A.">
        <title>Purification and characterization of acetone carboxylase from Xanthobacter strain Py2.</title>
        <authorList>
            <person name="Sluis M.K."/>
            <person name="Ensign S.A."/>
        </authorList>
    </citation>
    <scope>FUNCTION</scope>
    <scope>CATALYTIC ACTIVITY</scope>
    <scope>COFACTOR</scope>
    <scope>BIOPHYSICOCHEMICAL PROPERTIES</scope>
    <scope>SUBUNIT</scope>
    <scope>MASS SPECTROMETRY</scope>
</reference>
<gene>
    <name evidence="4" type="primary">acxA</name>
    <name type="ordered locus">Xaut_3509</name>
</gene>